<keyword id="KW-0997">Cell inner membrane</keyword>
<keyword id="KW-1003">Cell membrane</keyword>
<keyword id="KW-0444">Lipid biosynthesis</keyword>
<keyword id="KW-0443">Lipid metabolism</keyword>
<keyword id="KW-0472">Membrane</keyword>
<keyword id="KW-0594">Phospholipid biosynthesis</keyword>
<keyword id="KW-1208">Phospholipid metabolism</keyword>
<keyword id="KW-0808">Transferase</keyword>
<keyword id="KW-0812">Transmembrane</keyword>
<keyword id="KW-1133">Transmembrane helix</keyword>
<evidence type="ECO:0000255" key="1">
    <source>
        <dbReference type="HAMAP-Rule" id="MF_01043"/>
    </source>
</evidence>
<name>PLSY_BURCH</name>
<dbReference type="EC" id="2.3.1.275" evidence="1"/>
<dbReference type="EMBL" id="CP000458">
    <property type="protein sequence ID" value="ABK09306.1"/>
    <property type="molecule type" value="Genomic_DNA"/>
</dbReference>
<dbReference type="RefSeq" id="WP_011546049.1">
    <property type="nucleotide sequence ID" value="NC_008542.1"/>
</dbReference>
<dbReference type="SMR" id="A0K9X9"/>
<dbReference type="KEGG" id="bch:Bcen2424_2556"/>
<dbReference type="HOGENOM" id="CLU_081254_0_0_4"/>
<dbReference type="UniPathway" id="UPA00085"/>
<dbReference type="GO" id="GO:0005886">
    <property type="term" value="C:plasma membrane"/>
    <property type="evidence" value="ECO:0007669"/>
    <property type="project" value="UniProtKB-SubCell"/>
</dbReference>
<dbReference type="GO" id="GO:0043772">
    <property type="term" value="F:acyl-phosphate glycerol-3-phosphate acyltransferase activity"/>
    <property type="evidence" value="ECO:0007669"/>
    <property type="project" value="UniProtKB-UniRule"/>
</dbReference>
<dbReference type="GO" id="GO:0008654">
    <property type="term" value="P:phospholipid biosynthetic process"/>
    <property type="evidence" value="ECO:0007669"/>
    <property type="project" value="UniProtKB-UniRule"/>
</dbReference>
<dbReference type="HAMAP" id="MF_01043">
    <property type="entry name" value="PlsY"/>
    <property type="match status" value="1"/>
</dbReference>
<dbReference type="InterPro" id="IPR003811">
    <property type="entry name" value="G3P_acylTferase_PlsY"/>
</dbReference>
<dbReference type="NCBIfam" id="TIGR00023">
    <property type="entry name" value="glycerol-3-phosphate 1-O-acyltransferase PlsY"/>
    <property type="match status" value="1"/>
</dbReference>
<dbReference type="PANTHER" id="PTHR30309:SF0">
    <property type="entry name" value="GLYCEROL-3-PHOSPHATE ACYLTRANSFERASE-RELATED"/>
    <property type="match status" value="1"/>
</dbReference>
<dbReference type="PANTHER" id="PTHR30309">
    <property type="entry name" value="INNER MEMBRANE PROTEIN YGIH"/>
    <property type="match status" value="1"/>
</dbReference>
<dbReference type="Pfam" id="PF02660">
    <property type="entry name" value="G3P_acyltransf"/>
    <property type="match status" value="1"/>
</dbReference>
<dbReference type="SMART" id="SM01207">
    <property type="entry name" value="G3P_acyltransf"/>
    <property type="match status" value="1"/>
</dbReference>
<reference key="1">
    <citation type="submission" date="2006-08" db="EMBL/GenBank/DDBJ databases">
        <title>Complete sequence of chromosome 1 of Burkholderia cenocepacia HI2424.</title>
        <authorList>
            <person name="Copeland A."/>
            <person name="Lucas S."/>
            <person name="Lapidus A."/>
            <person name="Barry K."/>
            <person name="Detter J.C."/>
            <person name="Glavina del Rio T."/>
            <person name="Hammon N."/>
            <person name="Israni S."/>
            <person name="Pitluck S."/>
            <person name="Chain P."/>
            <person name="Malfatti S."/>
            <person name="Shin M."/>
            <person name="Vergez L."/>
            <person name="Schmutz J."/>
            <person name="Larimer F."/>
            <person name="Land M."/>
            <person name="Hauser L."/>
            <person name="Kyrpides N."/>
            <person name="Kim E."/>
            <person name="LiPuma J.J."/>
            <person name="Gonzalez C.F."/>
            <person name="Konstantinidis K."/>
            <person name="Tiedje J.M."/>
            <person name="Richardson P."/>
        </authorList>
    </citation>
    <scope>NUCLEOTIDE SEQUENCE [LARGE SCALE GENOMIC DNA]</scope>
    <source>
        <strain>HI2424</strain>
    </source>
</reference>
<proteinExistence type="inferred from homology"/>
<accession>A0K9X9</accession>
<gene>
    <name evidence="1" type="primary">plsY</name>
    <name type="ordered locus">Bcen2424_2556</name>
</gene>
<comment type="function">
    <text evidence="1">Catalyzes the transfer of an acyl group from acyl-phosphate (acyl-PO(4)) to glycerol-3-phosphate (G3P) to form lysophosphatidic acid (LPA). This enzyme utilizes acyl-phosphate as fatty acyl donor, but not acyl-CoA or acyl-ACP.</text>
</comment>
<comment type="catalytic activity">
    <reaction evidence="1">
        <text>an acyl phosphate + sn-glycerol 3-phosphate = a 1-acyl-sn-glycero-3-phosphate + phosphate</text>
        <dbReference type="Rhea" id="RHEA:34075"/>
        <dbReference type="ChEBI" id="CHEBI:43474"/>
        <dbReference type="ChEBI" id="CHEBI:57597"/>
        <dbReference type="ChEBI" id="CHEBI:57970"/>
        <dbReference type="ChEBI" id="CHEBI:59918"/>
        <dbReference type="EC" id="2.3.1.275"/>
    </reaction>
</comment>
<comment type="pathway">
    <text evidence="1">Lipid metabolism; phospholipid metabolism.</text>
</comment>
<comment type="subunit">
    <text evidence="1">Probably interacts with PlsX.</text>
</comment>
<comment type="subcellular location">
    <subcellularLocation>
        <location evidence="1">Cell inner membrane</location>
        <topology evidence="1">Multi-pass membrane protein</topology>
    </subcellularLocation>
</comment>
<comment type="similarity">
    <text evidence="1">Belongs to the PlsY family.</text>
</comment>
<organism>
    <name type="scientific">Burkholderia cenocepacia (strain HI2424)</name>
    <dbReference type="NCBI Taxonomy" id="331272"/>
    <lineage>
        <taxon>Bacteria</taxon>
        <taxon>Pseudomonadati</taxon>
        <taxon>Pseudomonadota</taxon>
        <taxon>Betaproteobacteria</taxon>
        <taxon>Burkholderiales</taxon>
        <taxon>Burkholderiaceae</taxon>
        <taxon>Burkholderia</taxon>
        <taxon>Burkholderia cepacia complex</taxon>
    </lineage>
</organism>
<sequence length="213" mass="22358">MQILLAALVAYLIGSVSFAVVVSSVMGLADPRSYGSKNPGATNVLRSGNKKAAILTLVGDAFKGWIAVWLARHFGLPDVAIAWVAIAVFLGHLYPVFFRFQGGKGVATAAGVLLAVHPVLGLATALTWLIVAFFFRYSSLAALVAAVFAPVFDVFLFGMPGHNPIAWAVLAMSVLLVWRHRGNISKLLAGQESRIGDKKKAAADGGAQDGGKA</sequence>
<protein>
    <recommendedName>
        <fullName evidence="1">Glycerol-3-phosphate acyltransferase</fullName>
    </recommendedName>
    <alternativeName>
        <fullName evidence="1">Acyl-PO4 G3P acyltransferase</fullName>
    </alternativeName>
    <alternativeName>
        <fullName evidence="1">Acyl-phosphate--glycerol-3-phosphate acyltransferase</fullName>
    </alternativeName>
    <alternativeName>
        <fullName evidence="1">G3P acyltransferase</fullName>
        <shortName evidence="1">GPAT</shortName>
        <ecNumber evidence="1">2.3.1.275</ecNumber>
    </alternativeName>
    <alternativeName>
        <fullName evidence="1">Lysophosphatidic acid synthase</fullName>
        <shortName evidence="1">LPA synthase</shortName>
    </alternativeName>
</protein>
<feature type="chain" id="PRO_1000084381" description="Glycerol-3-phosphate acyltransferase">
    <location>
        <begin position="1"/>
        <end position="213"/>
    </location>
</feature>
<feature type="transmembrane region" description="Helical" evidence="1">
    <location>
        <begin position="3"/>
        <end position="23"/>
    </location>
</feature>
<feature type="transmembrane region" description="Helical" evidence="1">
    <location>
        <begin position="51"/>
        <end position="71"/>
    </location>
</feature>
<feature type="transmembrane region" description="Helical" evidence="1">
    <location>
        <begin position="78"/>
        <end position="98"/>
    </location>
</feature>
<feature type="transmembrane region" description="Helical" evidence="1">
    <location>
        <begin position="115"/>
        <end position="135"/>
    </location>
</feature>
<feature type="transmembrane region" description="Helical" evidence="1">
    <location>
        <begin position="140"/>
        <end position="160"/>
    </location>
</feature>